<protein>
    <recommendedName>
        <fullName evidence="1">tRNA pseudouridine synthase B</fullName>
        <ecNumber evidence="1">5.4.99.25</ecNumber>
    </recommendedName>
    <alternativeName>
        <fullName evidence="1">tRNA pseudouridine(55) synthase</fullName>
        <shortName evidence="1">Psi55 synthase</shortName>
    </alternativeName>
    <alternativeName>
        <fullName evidence="1">tRNA pseudouridylate synthase</fullName>
    </alternativeName>
    <alternativeName>
        <fullName evidence="1">tRNA-uridine isomerase</fullName>
    </alternativeName>
</protein>
<evidence type="ECO:0000255" key="1">
    <source>
        <dbReference type="HAMAP-Rule" id="MF_01080"/>
    </source>
</evidence>
<dbReference type="EC" id="5.4.99.25" evidence="1"/>
<dbReference type="EMBL" id="CR628337">
    <property type="protein sequence ID" value="CAH16928.1"/>
    <property type="molecule type" value="Genomic_DNA"/>
</dbReference>
<dbReference type="RefSeq" id="WP_011216619.1">
    <property type="nucleotide sequence ID" value="NC_006369.1"/>
</dbReference>
<dbReference type="SMR" id="Q5WT38"/>
<dbReference type="KEGG" id="lpf:lpl2687"/>
<dbReference type="LegioList" id="lpl2687"/>
<dbReference type="HOGENOM" id="CLU_032087_0_3_6"/>
<dbReference type="Proteomes" id="UP000002517">
    <property type="component" value="Chromosome"/>
</dbReference>
<dbReference type="GO" id="GO:0003723">
    <property type="term" value="F:RNA binding"/>
    <property type="evidence" value="ECO:0007669"/>
    <property type="project" value="InterPro"/>
</dbReference>
<dbReference type="GO" id="GO:0160148">
    <property type="term" value="F:tRNA pseudouridine(55) synthase activity"/>
    <property type="evidence" value="ECO:0007669"/>
    <property type="project" value="UniProtKB-EC"/>
</dbReference>
<dbReference type="GO" id="GO:1990481">
    <property type="term" value="P:mRNA pseudouridine synthesis"/>
    <property type="evidence" value="ECO:0007669"/>
    <property type="project" value="TreeGrafter"/>
</dbReference>
<dbReference type="GO" id="GO:0031119">
    <property type="term" value="P:tRNA pseudouridine synthesis"/>
    <property type="evidence" value="ECO:0007669"/>
    <property type="project" value="UniProtKB-UniRule"/>
</dbReference>
<dbReference type="CDD" id="cd02573">
    <property type="entry name" value="PseudoU_synth_EcTruB"/>
    <property type="match status" value="1"/>
</dbReference>
<dbReference type="CDD" id="cd21152">
    <property type="entry name" value="PUA_TruB_bacterial"/>
    <property type="match status" value="1"/>
</dbReference>
<dbReference type="Gene3D" id="3.30.2350.10">
    <property type="entry name" value="Pseudouridine synthase"/>
    <property type="match status" value="1"/>
</dbReference>
<dbReference type="Gene3D" id="2.30.130.10">
    <property type="entry name" value="PUA domain"/>
    <property type="match status" value="1"/>
</dbReference>
<dbReference type="HAMAP" id="MF_01080">
    <property type="entry name" value="TruB_bact"/>
    <property type="match status" value="1"/>
</dbReference>
<dbReference type="InterPro" id="IPR020103">
    <property type="entry name" value="PsdUridine_synth_cat_dom_sf"/>
</dbReference>
<dbReference type="InterPro" id="IPR002501">
    <property type="entry name" value="PsdUridine_synth_N"/>
</dbReference>
<dbReference type="InterPro" id="IPR015947">
    <property type="entry name" value="PUA-like_sf"/>
</dbReference>
<dbReference type="InterPro" id="IPR036974">
    <property type="entry name" value="PUA_sf"/>
</dbReference>
<dbReference type="InterPro" id="IPR014780">
    <property type="entry name" value="tRNA_psdUridine_synth_TruB"/>
</dbReference>
<dbReference type="InterPro" id="IPR015240">
    <property type="entry name" value="tRNA_sdUridine_synth_fam1_C"/>
</dbReference>
<dbReference type="InterPro" id="IPR032819">
    <property type="entry name" value="TruB_C"/>
</dbReference>
<dbReference type="NCBIfam" id="TIGR00431">
    <property type="entry name" value="TruB"/>
    <property type="match status" value="1"/>
</dbReference>
<dbReference type="PANTHER" id="PTHR13767:SF2">
    <property type="entry name" value="PSEUDOURIDYLATE SYNTHASE TRUB1"/>
    <property type="match status" value="1"/>
</dbReference>
<dbReference type="PANTHER" id="PTHR13767">
    <property type="entry name" value="TRNA-PSEUDOURIDINE SYNTHASE"/>
    <property type="match status" value="1"/>
</dbReference>
<dbReference type="Pfam" id="PF09157">
    <property type="entry name" value="TruB-C_2"/>
    <property type="match status" value="1"/>
</dbReference>
<dbReference type="Pfam" id="PF16198">
    <property type="entry name" value="TruB_C_2"/>
    <property type="match status" value="1"/>
</dbReference>
<dbReference type="Pfam" id="PF01509">
    <property type="entry name" value="TruB_N"/>
    <property type="match status" value="1"/>
</dbReference>
<dbReference type="SUPFAM" id="SSF55120">
    <property type="entry name" value="Pseudouridine synthase"/>
    <property type="match status" value="1"/>
</dbReference>
<dbReference type="SUPFAM" id="SSF88697">
    <property type="entry name" value="PUA domain-like"/>
    <property type="match status" value="1"/>
</dbReference>
<reference key="1">
    <citation type="journal article" date="2004" name="Nat. Genet.">
        <title>Evidence in the Legionella pneumophila genome for exploitation of host cell functions and high genome plasticity.</title>
        <authorList>
            <person name="Cazalet C."/>
            <person name="Rusniok C."/>
            <person name="Brueggemann H."/>
            <person name="Zidane N."/>
            <person name="Magnier A."/>
            <person name="Ma L."/>
            <person name="Tichit M."/>
            <person name="Jarraud S."/>
            <person name="Bouchier C."/>
            <person name="Vandenesch F."/>
            <person name="Kunst F."/>
            <person name="Etienne J."/>
            <person name="Glaser P."/>
            <person name="Buchrieser C."/>
        </authorList>
    </citation>
    <scope>NUCLEOTIDE SEQUENCE [LARGE SCALE GENOMIC DNA]</scope>
    <source>
        <strain>Lens</strain>
    </source>
</reference>
<comment type="function">
    <text evidence="1">Responsible for synthesis of pseudouridine from uracil-55 in the psi GC loop of transfer RNAs.</text>
</comment>
<comment type="catalytic activity">
    <reaction evidence="1">
        <text>uridine(55) in tRNA = pseudouridine(55) in tRNA</text>
        <dbReference type="Rhea" id="RHEA:42532"/>
        <dbReference type="Rhea" id="RHEA-COMP:10101"/>
        <dbReference type="Rhea" id="RHEA-COMP:10102"/>
        <dbReference type="ChEBI" id="CHEBI:65314"/>
        <dbReference type="ChEBI" id="CHEBI:65315"/>
        <dbReference type="EC" id="5.4.99.25"/>
    </reaction>
</comment>
<comment type="similarity">
    <text evidence="1">Belongs to the pseudouridine synthase TruB family. Type 1 subfamily.</text>
</comment>
<gene>
    <name evidence="1" type="primary">truB</name>
    <name type="ordered locus">lpl2687</name>
</gene>
<keyword id="KW-0413">Isomerase</keyword>
<keyword id="KW-0819">tRNA processing</keyword>
<accession>Q5WT38</accession>
<proteinExistence type="inferred from homology"/>
<sequence length="303" mass="33359">MTTIESKCSIDGILLLNKPQGMTSNAALQKAKHLFGAKKAGHTGSLDPLATGMLPLCFGEATKICQYLLNADKSYETIGRLGSKTNTADCTGEVIFCIENYTVSHEELIATLEKYKGKTKQIPSMFSALKHKGTPLYRLAREGIEIERKARDIVISQLKLEQFDGECFTLTVSCSKGTYIRNLVEDIGDTLKAGAHMTKLHRLYTAGFENNRMYTLDELQDMPLSQRLACLIPIDQAVQHLTPVILSDSEVTAIRQGKVISNKTSAVEGEDLRLYGEQSQFIGIGQALIHGDIKAKRLVSFAL</sequence>
<organism>
    <name type="scientific">Legionella pneumophila (strain Lens)</name>
    <dbReference type="NCBI Taxonomy" id="297245"/>
    <lineage>
        <taxon>Bacteria</taxon>
        <taxon>Pseudomonadati</taxon>
        <taxon>Pseudomonadota</taxon>
        <taxon>Gammaproteobacteria</taxon>
        <taxon>Legionellales</taxon>
        <taxon>Legionellaceae</taxon>
        <taxon>Legionella</taxon>
    </lineage>
</organism>
<name>TRUB_LEGPL</name>
<feature type="chain" id="PRO_0000121853" description="tRNA pseudouridine synthase B">
    <location>
        <begin position="1"/>
        <end position="303"/>
    </location>
</feature>
<feature type="active site" description="Nucleophile" evidence="1">
    <location>
        <position position="47"/>
    </location>
</feature>